<organism>
    <name type="scientific">Streptococcus pyogenes serotype M4 (strain MGAS10750)</name>
    <dbReference type="NCBI Taxonomy" id="370554"/>
    <lineage>
        <taxon>Bacteria</taxon>
        <taxon>Bacillati</taxon>
        <taxon>Bacillota</taxon>
        <taxon>Bacilli</taxon>
        <taxon>Lactobacillales</taxon>
        <taxon>Streptococcaceae</taxon>
        <taxon>Streptococcus</taxon>
    </lineage>
</organism>
<keyword id="KW-0030">Aminoacyl-tRNA synthetase</keyword>
<keyword id="KW-0067">ATP-binding</keyword>
<keyword id="KW-0963">Cytoplasm</keyword>
<keyword id="KW-0436">Ligase</keyword>
<keyword id="KW-0479">Metal-binding</keyword>
<keyword id="KW-0547">Nucleotide-binding</keyword>
<keyword id="KW-0648">Protein biosynthesis</keyword>
<keyword id="KW-0694">RNA-binding</keyword>
<keyword id="KW-0820">tRNA-binding</keyword>
<keyword id="KW-0862">Zinc</keyword>
<proteinExistence type="inferred from homology"/>
<name>SYA_STRPF</name>
<accession>Q1J5Z4</accession>
<feature type="chain" id="PRO_0000347825" description="Alanine--tRNA ligase">
    <location>
        <begin position="1"/>
        <end position="872"/>
    </location>
</feature>
<feature type="binding site" evidence="1">
    <location>
        <position position="567"/>
    </location>
    <ligand>
        <name>Zn(2+)</name>
        <dbReference type="ChEBI" id="CHEBI:29105"/>
    </ligand>
</feature>
<feature type="binding site" evidence="1">
    <location>
        <position position="571"/>
    </location>
    <ligand>
        <name>Zn(2+)</name>
        <dbReference type="ChEBI" id="CHEBI:29105"/>
    </ligand>
</feature>
<feature type="binding site" evidence="1">
    <location>
        <position position="669"/>
    </location>
    <ligand>
        <name>Zn(2+)</name>
        <dbReference type="ChEBI" id="CHEBI:29105"/>
    </ligand>
</feature>
<feature type="binding site" evidence="1">
    <location>
        <position position="673"/>
    </location>
    <ligand>
        <name>Zn(2+)</name>
        <dbReference type="ChEBI" id="CHEBI:29105"/>
    </ligand>
</feature>
<gene>
    <name evidence="1" type="primary">alaS</name>
    <name type="ordered locus">MGAS10750_Spy1239</name>
</gene>
<reference key="1">
    <citation type="journal article" date="2006" name="Proc. Natl. Acad. Sci. U.S.A.">
        <title>Molecular genetic anatomy of inter- and intraserotype variation in the human bacterial pathogen group A Streptococcus.</title>
        <authorList>
            <person name="Beres S.B."/>
            <person name="Richter E.W."/>
            <person name="Nagiec M.J."/>
            <person name="Sumby P."/>
            <person name="Porcella S.F."/>
            <person name="DeLeo F.R."/>
            <person name="Musser J.M."/>
        </authorList>
    </citation>
    <scope>NUCLEOTIDE SEQUENCE [LARGE SCALE GENOMIC DNA]</scope>
    <source>
        <strain>MGAS10750</strain>
    </source>
</reference>
<protein>
    <recommendedName>
        <fullName evidence="1">Alanine--tRNA ligase</fullName>
        <ecNumber evidence="1">6.1.1.7</ecNumber>
    </recommendedName>
    <alternativeName>
        <fullName evidence="1">Alanyl-tRNA synthetase</fullName>
        <shortName evidence="1">AlaRS</shortName>
    </alternativeName>
</protein>
<evidence type="ECO:0000255" key="1">
    <source>
        <dbReference type="HAMAP-Rule" id="MF_00036"/>
    </source>
</evidence>
<comment type="function">
    <text evidence="1">Catalyzes the attachment of alanine to tRNA(Ala) in a two-step reaction: alanine is first activated by ATP to form Ala-AMP and then transferred to the acceptor end of tRNA(Ala). Also edits incorrectly charged Ser-tRNA(Ala) and Gly-tRNA(Ala) via its editing domain.</text>
</comment>
<comment type="catalytic activity">
    <reaction evidence="1">
        <text>tRNA(Ala) + L-alanine + ATP = L-alanyl-tRNA(Ala) + AMP + diphosphate</text>
        <dbReference type="Rhea" id="RHEA:12540"/>
        <dbReference type="Rhea" id="RHEA-COMP:9657"/>
        <dbReference type="Rhea" id="RHEA-COMP:9923"/>
        <dbReference type="ChEBI" id="CHEBI:30616"/>
        <dbReference type="ChEBI" id="CHEBI:33019"/>
        <dbReference type="ChEBI" id="CHEBI:57972"/>
        <dbReference type="ChEBI" id="CHEBI:78442"/>
        <dbReference type="ChEBI" id="CHEBI:78497"/>
        <dbReference type="ChEBI" id="CHEBI:456215"/>
        <dbReference type="EC" id="6.1.1.7"/>
    </reaction>
</comment>
<comment type="cofactor">
    <cofactor evidence="1">
        <name>Zn(2+)</name>
        <dbReference type="ChEBI" id="CHEBI:29105"/>
    </cofactor>
    <text evidence="1">Binds 1 zinc ion per subunit.</text>
</comment>
<comment type="subcellular location">
    <subcellularLocation>
        <location evidence="1">Cytoplasm</location>
    </subcellularLocation>
</comment>
<comment type="domain">
    <text evidence="1">Consists of three domains; the N-terminal catalytic domain, the editing domain and the C-terminal C-Ala domain. The editing domain removes incorrectly charged amino acids, while the C-Ala domain, along with tRNA(Ala), serves as a bridge to cooperatively bring together the editing and aminoacylation centers thus stimulating deacylation of misacylated tRNAs.</text>
</comment>
<comment type="similarity">
    <text evidence="1">Belongs to the class-II aminoacyl-tRNA synthetase family.</text>
</comment>
<sequence length="872" mass="96534">MKELSSAQIRQMWLDFWKSKGHCVEPSANLVPVNDPTLLWINSGVATLKKYFDGSVIPENPRITNAQKSIRTNDIENVGKTARHHTMFEMLGNFSIGDYFRDEAIEWGFELLTSPDWFDFPKDKLYMTYYPDDKDSYNRWIACGVEPSHLVPIEDNFWEIGAGPSGPDTEIFFDRGEDFDPENIGLRLLAEDIENDRYIEIWNIVLSQFNADPAVPRSEYKELPNKNIDTGAGLERLAAVMQGAKTNFETDLFMPIIREVEKLSGKTYNPDGDNMSFKVIADHIRALSFAIGDGALPGNEGRGYVLRRLLRRAVMHGRRLGINETFLYKLVLTVGQIMESYYPEVLEKRDFIEKIVKREEETFARTIDAGSGHLDSLLAQLKAEGKDTLEGKDIFKLYDTYGFPVELTEELAEDAGYKIDHEGFKSAMKEQQDRARAAVVKGGSMGMQNETLAGIVEESRFEYDTYSLESSLSVIIADNERTEAVSEGQALLVFAQTPFYAEMGGQVADTGRIKNDKGDTVAEVVDVQKAPNGQPLHTVNVLASLSVGTNYTLEINKERRLAVEKNHTATHLLHAALHNVIGEHATQAGSLNEEEFLRFDFTHFEAVSNEELRHIEQEVNEQIWNALTITTTETDVETAKEMGAMALFGEKYGKVVRVVQIGNYSVELCGGTHLNNSSEIGLFKIVKEEGIGSGTRRIIAVTGRQAFEAYRNQEDALKEIAATVKAPQLKDAAAKVQALSDSLRDLQKENAELKEKAAAAAAGDVFKDVQEAKGVRFIASQVDVADAGALRTFADNWKQKDYSDVLVLVAAIGEKVNVLVASKTKDVHAGNMIKELAPIVAGRGGGKPDMAMAGGSDASKIAELLAAVAETV</sequence>
<dbReference type="EC" id="6.1.1.7" evidence="1"/>
<dbReference type="EMBL" id="CP000262">
    <property type="protein sequence ID" value="ABF38189.1"/>
    <property type="molecule type" value="Genomic_DNA"/>
</dbReference>
<dbReference type="SMR" id="Q1J5Z4"/>
<dbReference type="KEGG" id="spi:MGAS10750_Spy1239"/>
<dbReference type="HOGENOM" id="CLU_004485_1_1_9"/>
<dbReference type="Proteomes" id="UP000002434">
    <property type="component" value="Chromosome"/>
</dbReference>
<dbReference type="GO" id="GO:0005829">
    <property type="term" value="C:cytosol"/>
    <property type="evidence" value="ECO:0007669"/>
    <property type="project" value="TreeGrafter"/>
</dbReference>
<dbReference type="GO" id="GO:0004813">
    <property type="term" value="F:alanine-tRNA ligase activity"/>
    <property type="evidence" value="ECO:0007669"/>
    <property type="project" value="UniProtKB-UniRule"/>
</dbReference>
<dbReference type="GO" id="GO:0002161">
    <property type="term" value="F:aminoacyl-tRNA deacylase activity"/>
    <property type="evidence" value="ECO:0007669"/>
    <property type="project" value="TreeGrafter"/>
</dbReference>
<dbReference type="GO" id="GO:0005524">
    <property type="term" value="F:ATP binding"/>
    <property type="evidence" value="ECO:0007669"/>
    <property type="project" value="UniProtKB-UniRule"/>
</dbReference>
<dbReference type="GO" id="GO:0140096">
    <property type="term" value="F:catalytic activity, acting on a protein"/>
    <property type="evidence" value="ECO:0007669"/>
    <property type="project" value="UniProtKB-ARBA"/>
</dbReference>
<dbReference type="GO" id="GO:0016740">
    <property type="term" value="F:transferase activity"/>
    <property type="evidence" value="ECO:0007669"/>
    <property type="project" value="UniProtKB-ARBA"/>
</dbReference>
<dbReference type="GO" id="GO:0000049">
    <property type="term" value="F:tRNA binding"/>
    <property type="evidence" value="ECO:0007669"/>
    <property type="project" value="UniProtKB-KW"/>
</dbReference>
<dbReference type="GO" id="GO:0008270">
    <property type="term" value="F:zinc ion binding"/>
    <property type="evidence" value="ECO:0007669"/>
    <property type="project" value="UniProtKB-UniRule"/>
</dbReference>
<dbReference type="GO" id="GO:0006419">
    <property type="term" value="P:alanyl-tRNA aminoacylation"/>
    <property type="evidence" value="ECO:0007669"/>
    <property type="project" value="UniProtKB-UniRule"/>
</dbReference>
<dbReference type="CDD" id="cd00673">
    <property type="entry name" value="AlaRS_core"/>
    <property type="match status" value="1"/>
</dbReference>
<dbReference type="FunFam" id="3.10.310.40:FF:000001">
    <property type="entry name" value="Alanine--tRNA ligase"/>
    <property type="match status" value="1"/>
</dbReference>
<dbReference type="FunFam" id="3.30.54.20:FF:000001">
    <property type="entry name" value="Alanine--tRNA ligase"/>
    <property type="match status" value="1"/>
</dbReference>
<dbReference type="FunFam" id="3.30.930.10:FF:000046">
    <property type="entry name" value="Alanine--tRNA ligase"/>
    <property type="match status" value="1"/>
</dbReference>
<dbReference type="FunFam" id="3.30.980.10:FF:000004">
    <property type="entry name" value="Alanine--tRNA ligase, cytoplasmic"/>
    <property type="match status" value="1"/>
</dbReference>
<dbReference type="Gene3D" id="2.40.30.130">
    <property type="match status" value="1"/>
</dbReference>
<dbReference type="Gene3D" id="3.10.310.40">
    <property type="match status" value="1"/>
</dbReference>
<dbReference type="Gene3D" id="3.30.54.20">
    <property type="match status" value="1"/>
</dbReference>
<dbReference type="Gene3D" id="6.10.250.550">
    <property type="match status" value="1"/>
</dbReference>
<dbReference type="Gene3D" id="3.30.930.10">
    <property type="entry name" value="Bira Bifunctional Protein, Domain 2"/>
    <property type="match status" value="1"/>
</dbReference>
<dbReference type="Gene3D" id="3.30.980.10">
    <property type="entry name" value="Threonyl-trna Synthetase, Chain A, domain 2"/>
    <property type="match status" value="1"/>
</dbReference>
<dbReference type="HAMAP" id="MF_00036_B">
    <property type="entry name" value="Ala_tRNA_synth_B"/>
    <property type="match status" value="1"/>
</dbReference>
<dbReference type="InterPro" id="IPR045864">
    <property type="entry name" value="aa-tRNA-synth_II/BPL/LPL"/>
</dbReference>
<dbReference type="InterPro" id="IPR002318">
    <property type="entry name" value="Ala-tRNA-lgiase_IIc"/>
</dbReference>
<dbReference type="InterPro" id="IPR018162">
    <property type="entry name" value="Ala-tRNA-ligase_IIc_anticod-bd"/>
</dbReference>
<dbReference type="InterPro" id="IPR018165">
    <property type="entry name" value="Ala-tRNA-synth_IIc_core"/>
</dbReference>
<dbReference type="InterPro" id="IPR018164">
    <property type="entry name" value="Ala-tRNA-synth_IIc_N"/>
</dbReference>
<dbReference type="InterPro" id="IPR050058">
    <property type="entry name" value="Ala-tRNA_ligase"/>
</dbReference>
<dbReference type="InterPro" id="IPR023033">
    <property type="entry name" value="Ala_tRNA_ligase_euk/bac"/>
</dbReference>
<dbReference type="InterPro" id="IPR003156">
    <property type="entry name" value="DHHA1_dom"/>
</dbReference>
<dbReference type="InterPro" id="IPR018163">
    <property type="entry name" value="Thr/Ala-tRNA-synth_IIc_edit"/>
</dbReference>
<dbReference type="InterPro" id="IPR009000">
    <property type="entry name" value="Transl_B-barrel_sf"/>
</dbReference>
<dbReference type="InterPro" id="IPR012947">
    <property type="entry name" value="tRNA_SAD"/>
</dbReference>
<dbReference type="NCBIfam" id="TIGR00344">
    <property type="entry name" value="alaS"/>
    <property type="match status" value="1"/>
</dbReference>
<dbReference type="PANTHER" id="PTHR11777:SF9">
    <property type="entry name" value="ALANINE--TRNA LIGASE, CYTOPLASMIC"/>
    <property type="match status" value="1"/>
</dbReference>
<dbReference type="PANTHER" id="PTHR11777">
    <property type="entry name" value="ALANYL-TRNA SYNTHETASE"/>
    <property type="match status" value="1"/>
</dbReference>
<dbReference type="Pfam" id="PF02272">
    <property type="entry name" value="DHHA1"/>
    <property type="match status" value="1"/>
</dbReference>
<dbReference type="Pfam" id="PF01411">
    <property type="entry name" value="tRNA-synt_2c"/>
    <property type="match status" value="1"/>
</dbReference>
<dbReference type="Pfam" id="PF07973">
    <property type="entry name" value="tRNA_SAD"/>
    <property type="match status" value="1"/>
</dbReference>
<dbReference type="PRINTS" id="PR00980">
    <property type="entry name" value="TRNASYNTHALA"/>
</dbReference>
<dbReference type="SMART" id="SM00863">
    <property type="entry name" value="tRNA_SAD"/>
    <property type="match status" value="1"/>
</dbReference>
<dbReference type="SUPFAM" id="SSF55681">
    <property type="entry name" value="Class II aaRS and biotin synthetases"/>
    <property type="match status" value="1"/>
</dbReference>
<dbReference type="SUPFAM" id="SSF101353">
    <property type="entry name" value="Putative anticodon-binding domain of alanyl-tRNA synthetase (AlaRS)"/>
    <property type="match status" value="1"/>
</dbReference>
<dbReference type="SUPFAM" id="SSF55186">
    <property type="entry name" value="ThrRS/AlaRS common domain"/>
    <property type="match status" value="1"/>
</dbReference>
<dbReference type="SUPFAM" id="SSF50447">
    <property type="entry name" value="Translation proteins"/>
    <property type="match status" value="1"/>
</dbReference>
<dbReference type="PROSITE" id="PS50860">
    <property type="entry name" value="AA_TRNA_LIGASE_II_ALA"/>
    <property type="match status" value="1"/>
</dbReference>